<keyword id="KW-0068">Autocatalytic cleavage</keyword>
<keyword id="KW-0106">Calcium</keyword>
<keyword id="KW-1003">Cell membrane</keyword>
<keyword id="KW-0868">Chloride</keyword>
<keyword id="KW-0325">Glycoprotein</keyword>
<keyword id="KW-0378">Hydrolase</keyword>
<keyword id="KW-0406">Ion transport</keyword>
<keyword id="KW-0472">Membrane</keyword>
<keyword id="KW-0479">Metal-binding</keyword>
<keyword id="KW-0482">Metalloprotease</keyword>
<keyword id="KW-0645">Protease</keyword>
<keyword id="KW-1185">Reference proteome</keyword>
<keyword id="KW-0732">Signal</keyword>
<keyword id="KW-0813">Transport</keyword>
<keyword id="KW-0862">Zinc</keyword>
<reference evidence="12" key="1">
    <citation type="journal article" date="1998" name="J. Biol. Chem.">
        <title>Molecular and functional characterization of a calcium-sensitive chloride channel from mouse lung.</title>
        <authorList>
            <person name="Gandhi R."/>
            <person name="Elble R.C."/>
            <person name="Gruber A.D."/>
            <person name="Schreur K.D."/>
            <person name="Ji H.L."/>
            <person name="Fuller C.M."/>
            <person name="Pauli B.U."/>
        </authorList>
    </citation>
    <scope>NUCLEOTIDE SEQUENCE [MRNA]</scope>
    <scope>FUNCTION</scope>
    <scope>TISSUE SPECIFICITY</scope>
    <scope>GLYCOSYLATION</scope>
    <scope>PROTEOLYTIC CLEAVAGE</scope>
    <source>
        <tissue evidence="12">Lung</tissue>
    </source>
</reference>
<reference evidence="11" key="2">
    <citation type="journal article" date="1999" name="Gene">
        <title>Characterization of a murine gene homologous to the bovine CaCC chloride channel.</title>
        <authorList>
            <person name="Romio L."/>
            <person name="Musante L."/>
            <person name="Cinti R."/>
            <person name="Seri M."/>
            <person name="Moran O."/>
            <person name="Zegarra-Moran O."/>
            <person name="Galietta L.J.V."/>
        </authorList>
    </citation>
    <scope>NUCLEOTIDE SEQUENCE [MRNA]</scope>
    <scope>FUNCTION</scope>
    <scope>TISSUE SPECIFICITY</scope>
</reference>
<reference evidence="14" key="3">
    <citation type="journal article" date="2005" name="Science">
        <title>The transcriptional landscape of the mammalian genome.</title>
        <authorList>
            <person name="Carninci P."/>
            <person name="Kasukawa T."/>
            <person name="Katayama S."/>
            <person name="Gough J."/>
            <person name="Frith M.C."/>
            <person name="Maeda N."/>
            <person name="Oyama R."/>
            <person name="Ravasi T."/>
            <person name="Lenhard B."/>
            <person name="Wells C."/>
            <person name="Kodzius R."/>
            <person name="Shimokawa K."/>
            <person name="Bajic V.B."/>
            <person name="Brenner S.E."/>
            <person name="Batalov S."/>
            <person name="Forrest A.R."/>
            <person name="Zavolan M."/>
            <person name="Davis M.J."/>
            <person name="Wilming L.G."/>
            <person name="Aidinis V."/>
            <person name="Allen J.E."/>
            <person name="Ambesi-Impiombato A."/>
            <person name="Apweiler R."/>
            <person name="Aturaliya R.N."/>
            <person name="Bailey T.L."/>
            <person name="Bansal M."/>
            <person name="Baxter L."/>
            <person name="Beisel K.W."/>
            <person name="Bersano T."/>
            <person name="Bono H."/>
            <person name="Chalk A.M."/>
            <person name="Chiu K.P."/>
            <person name="Choudhary V."/>
            <person name="Christoffels A."/>
            <person name="Clutterbuck D.R."/>
            <person name="Crowe M.L."/>
            <person name="Dalla E."/>
            <person name="Dalrymple B.P."/>
            <person name="de Bono B."/>
            <person name="Della Gatta G."/>
            <person name="di Bernardo D."/>
            <person name="Down T."/>
            <person name="Engstrom P."/>
            <person name="Fagiolini M."/>
            <person name="Faulkner G."/>
            <person name="Fletcher C.F."/>
            <person name="Fukushima T."/>
            <person name="Furuno M."/>
            <person name="Futaki S."/>
            <person name="Gariboldi M."/>
            <person name="Georgii-Hemming P."/>
            <person name="Gingeras T.R."/>
            <person name="Gojobori T."/>
            <person name="Green R.E."/>
            <person name="Gustincich S."/>
            <person name="Harbers M."/>
            <person name="Hayashi Y."/>
            <person name="Hensch T.K."/>
            <person name="Hirokawa N."/>
            <person name="Hill D."/>
            <person name="Huminiecki L."/>
            <person name="Iacono M."/>
            <person name="Ikeo K."/>
            <person name="Iwama A."/>
            <person name="Ishikawa T."/>
            <person name="Jakt M."/>
            <person name="Kanapin A."/>
            <person name="Katoh M."/>
            <person name="Kawasawa Y."/>
            <person name="Kelso J."/>
            <person name="Kitamura H."/>
            <person name="Kitano H."/>
            <person name="Kollias G."/>
            <person name="Krishnan S.P."/>
            <person name="Kruger A."/>
            <person name="Kummerfeld S.K."/>
            <person name="Kurochkin I.V."/>
            <person name="Lareau L.F."/>
            <person name="Lazarevic D."/>
            <person name="Lipovich L."/>
            <person name="Liu J."/>
            <person name="Liuni S."/>
            <person name="McWilliam S."/>
            <person name="Madan Babu M."/>
            <person name="Madera M."/>
            <person name="Marchionni L."/>
            <person name="Matsuda H."/>
            <person name="Matsuzawa S."/>
            <person name="Miki H."/>
            <person name="Mignone F."/>
            <person name="Miyake S."/>
            <person name="Morris K."/>
            <person name="Mottagui-Tabar S."/>
            <person name="Mulder N."/>
            <person name="Nakano N."/>
            <person name="Nakauchi H."/>
            <person name="Ng P."/>
            <person name="Nilsson R."/>
            <person name="Nishiguchi S."/>
            <person name="Nishikawa S."/>
            <person name="Nori F."/>
            <person name="Ohara O."/>
            <person name="Okazaki Y."/>
            <person name="Orlando V."/>
            <person name="Pang K.C."/>
            <person name="Pavan W.J."/>
            <person name="Pavesi G."/>
            <person name="Pesole G."/>
            <person name="Petrovsky N."/>
            <person name="Piazza S."/>
            <person name="Reed J."/>
            <person name="Reid J.F."/>
            <person name="Ring B.Z."/>
            <person name="Ringwald M."/>
            <person name="Rost B."/>
            <person name="Ruan Y."/>
            <person name="Salzberg S.L."/>
            <person name="Sandelin A."/>
            <person name="Schneider C."/>
            <person name="Schoenbach C."/>
            <person name="Sekiguchi K."/>
            <person name="Semple C.A."/>
            <person name="Seno S."/>
            <person name="Sessa L."/>
            <person name="Sheng Y."/>
            <person name="Shibata Y."/>
            <person name="Shimada H."/>
            <person name="Shimada K."/>
            <person name="Silva D."/>
            <person name="Sinclair B."/>
            <person name="Sperling S."/>
            <person name="Stupka E."/>
            <person name="Sugiura K."/>
            <person name="Sultana R."/>
            <person name="Takenaka Y."/>
            <person name="Taki K."/>
            <person name="Tammoja K."/>
            <person name="Tan S.L."/>
            <person name="Tang S."/>
            <person name="Taylor M.S."/>
            <person name="Tegner J."/>
            <person name="Teichmann S.A."/>
            <person name="Ueda H.R."/>
            <person name="van Nimwegen E."/>
            <person name="Verardo R."/>
            <person name="Wei C.L."/>
            <person name="Yagi K."/>
            <person name="Yamanishi H."/>
            <person name="Zabarovsky E."/>
            <person name="Zhu S."/>
            <person name="Zimmer A."/>
            <person name="Hide W."/>
            <person name="Bult C."/>
            <person name="Grimmond S.M."/>
            <person name="Teasdale R.D."/>
            <person name="Liu E.T."/>
            <person name="Brusic V."/>
            <person name="Quackenbush J."/>
            <person name="Wahlestedt C."/>
            <person name="Mattick J.S."/>
            <person name="Hume D.A."/>
            <person name="Kai C."/>
            <person name="Sasaki D."/>
            <person name="Tomaru Y."/>
            <person name="Fukuda S."/>
            <person name="Kanamori-Katayama M."/>
            <person name="Suzuki M."/>
            <person name="Aoki J."/>
            <person name="Arakawa T."/>
            <person name="Iida J."/>
            <person name="Imamura K."/>
            <person name="Itoh M."/>
            <person name="Kato T."/>
            <person name="Kawaji H."/>
            <person name="Kawagashira N."/>
            <person name="Kawashima T."/>
            <person name="Kojima M."/>
            <person name="Kondo S."/>
            <person name="Konno H."/>
            <person name="Nakano K."/>
            <person name="Ninomiya N."/>
            <person name="Nishio T."/>
            <person name="Okada M."/>
            <person name="Plessy C."/>
            <person name="Shibata K."/>
            <person name="Shiraki T."/>
            <person name="Suzuki S."/>
            <person name="Tagami M."/>
            <person name="Waki K."/>
            <person name="Watahiki A."/>
            <person name="Okamura-Oho Y."/>
            <person name="Suzuki H."/>
            <person name="Kawai J."/>
            <person name="Hayashizaki Y."/>
        </authorList>
    </citation>
    <scope>NUCLEOTIDE SEQUENCE [LARGE SCALE MRNA]</scope>
    <source>
        <strain evidence="14">C57BL/6J</strain>
        <tissue evidence="16">Heart</tissue>
        <tissue evidence="15">Lung</tissue>
        <tissue evidence="14">Olfactory bulb</tissue>
        <tissue evidence="17">Testis</tissue>
    </source>
</reference>
<reference evidence="19" key="4">
    <citation type="journal article" date="2009" name="PLoS Biol.">
        <title>Lineage-specific biology revealed by a finished genome assembly of the mouse.</title>
        <authorList>
            <person name="Church D.M."/>
            <person name="Goodstadt L."/>
            <person name="Hillier L.W."/>
            <person name="Zody M.C."/>
            <person name="Goldstein S."/>
            <person name="She X."/>
            <person name="Bult C.J."/>
            <person name="Agarwala R."/>
            <person name="Cherry J.L."/>
            <person name="DiCuccio M."/>
            <person name="Hlavina W."/>
            <person name="Kapustin Y."/>
            <person name="Meric P."/>
            <person name="Maglott D."/>
            <person name="Birtle Z."/>
            <person name="Marques A.C."/>
            <person name="Graves T."/>
            <person name="Zhou S."/>
            <person name="Teague B."/>
            <person name="Potamousis K."/>
            <person name="Churas C."/>
            <person name="Place M."/>
            <person name="Herschleb J."/>
            <person name="Runnheim R."/>
            <person name="Forrest D."/>
            <person name="Amos-Landgraf J."/>
            <person name="Schwartz D.C."/>
            <person name="Cheng Z."/>
            <person name="Lindblad-Toh K."/>
            <person name="Eichler E.E."/>
            <person name="Ponting C.P."/>
        </authorList>
    </citation>
    <scope>NUCLEOTIDE SEQUENCE [LARGE SCALE GENOMIC DNA]</scope>
    <source>
        <strain>C57BL/6J</strain>
    </source>
</reference>
<reference evidence="13" key="5">
    <citation type="journal article" date="2004" name="Genome Res.">
        <title>The status, quality, and expansion of the NIH full-length cDNA project: the Mammalian Gene Collection (MGC).</title>
        <authorList>
            <consortium name="The MGC Project Team"/>
        </authorList>
    </citation>
    <scope>NUCLEOTIDE SEQUENCE [LARGE SCALE MRNA]</scope>
</reference>
<reference key="6">
    <citation type="journal article" date="2010" name="Cell">
        <title>A tissue-specific atlas of mouse protein phosphorylation and expression.</title>
        <authorList>
            <person name="Huttlin E.L."/>
            <person name="Jedrychowski M.P."/>
            <person name="Elias J.E."/>
            <person name="Goswami T."/>
            <person name="Rad R."/>
            <person name="Beausoleil S.A."/>
            <person name="Villen J."/>
            <person name="Haas W."/>
            <person name="Sowa M.E."/>
            <person name="Gygi S.P."/>
        </authorList>
    </citation>
    <scope>IDENTIFICATION BY MASS SPECTROMETRY [LARGE SCALE ANALYSIS]</scope>
    <source>
        <tissue>Spleen</tissue>
    </source>
</reference>
<reference key="7">
    <citation type="journal article" date="2019" name="Sci. Rep.">
        <title>A complex of novel protease inhibitor, ovostatin homolog, with its cognate proteases in immature mice uterine luminal fluid.</title>
        <authorList>
            <person name="Huang H.L."/>
            <person name="Li S.C."/>
            <person name="Wu J.F."/>
        </authorList>
    </citation>
    <scope>INTERACTION IN A COMPLEX WITH A2ML1; C3 AND ALB</scope>
</reference>
<evidence type="ECO:0000250" key="1">
    <source>
        <dbReference type="UniProtKB" id="A8K7I4"/>
    </source>
</evidence>
<evidence type="ECO:0000255" key="2"/>
<evidence type="ECO:0000255" key="3">
    <source>
        <dbReference type="PROSITE-ProRule" id="PRU00219"/>
    </source>
</evidence>
<evidence type="ECO:0000255" key="4">
    <source>
        <dbReference type="PROSITE-ProRule" id="PRU00498"/>
    </source>
</evidence>
<evidence type="ECO:0000269" key="5">
    <source>
    </source>
</evidence>
<evidence type="ECO:0000269" key="6">
    <source>
    </source>
</evidence>
<evidence type="ECO:0000269" key="7">
    <source>
    </source>
</evidence>
<evidence type="ECO:0000303" key="8">
    <source>
    </source>
</evidence>
<evidence type="ECO:0000305" key="9"/>
<evidence type="ECO:0000305" key="10">
    <source>
    </source>
</evidence>
<evidence type="ECO:0000312" key="11">
    <source>
        <dbReference type="EMBL" id="AAC35003.1"/>
    </source>
</evidence>
<evidence type="ECO:0000312" key="12">
    <source>
        <dbReference type="EMBL" id="AAC79982.1"/>
    </source>
</evidence>
<evidence type="ECO:0000312" key="13">
    <source>
        <dbReference type="EMBL" id="AAI32343.1"/>
    </source>
</evidence>
<evidence type="ECO:0000312" key="14">
    <source>
        <dbReference type="EMBL" id="BAC27903.1"/>
    </source>
</evidence>
<evidence type="ECO:0000312" key="15">
    <source>
        <dbReference type="EMBL" id="BAC39823.1"/>
    </source>
</evidence>
<evidence type="ECO:0000312" key="16">
    <source>
        <dbReference type="EMBL" id="BAE24978.1"/>
    </source>
</evidence>
<evidence type="ECO:0000312" key="17">
    <source>
        <dbReference type="EMBL" id="BAE36582.1"/>
    </source>
</evidence>
<evidence type="ECO:0000312" key="18">
    <source>
        <dbReference type="MGI" id="MGI:1316732"/>
    </source>
</evidence>
<evidence type="ECO:0000312" key="19">
    <source>
        <dbReference type="Proteomes" id="UP000000589"/>
    </source>
</evidence>
<name>CA3A1_MOUSE</name>
<dbReference type="EC" id="3.4.-.-" evidence="10"/>
<dbReference type="EMBL" id="AF047838">
    <property type="protein sequence ID" value="AAC79982.1"/>
    <property type="molecule type" value="mRNA"/>
</dbReference>
<dbReference type="EMBL" id="AF052746">
    <property type="protein sequence ID" value="AAC35003.1"/>
    <property type="molecule type" value="mRNA"/>
</dbReference>
<dbReference type="EMBL" id="AK032511">
    <property type="protein sequence ID" value="BAC27903.1"/>
    <property type="molecule type" value="mRNA"/>
</dbReference>
<dbReference type="EMBL" id="AK087213">
    <property type="protein sequence ID" value="BAC39823.1"/>
    <property type="molecule type" value="mRNA"/>
</dbReference>
<dbReference type="EMBL" id="AK142211">
    <property type="protein sequence ID" value="BAE24978.1"/>
    <property type="molecule type" value="mRNA"/>
</dbReference>
<dbReference type="EMBL" id="AK161805">
    <property type="protein sequence ID" value="BAE36582.1"/>
    <property type="molecule type" value="mRNA"/>
</dbReference>
<dbReference type="EMBL" id="AC134404">
    <property type="status" value="NOT_ANNOTATED_CDS"/>
    <property type="molecule type" value="Genomic_DNA"/>
</dbReference>
<dbReference type="EMBL" id="AC137128">
    <property type="status" value="NOT_ANNOTATED_CDS"/>
    <property type="molecule type" value="Genomic_DNA"/>
</dbReference>
<dbReference type="EMBL" id="BC132342">
    <property type="protein sequence ID" value="AAI32343.1"/>
    <property type="molecule type" value="mRNA"/>
</dbReference>
<dbReference type="EMBL" id="BC145057">
    <property type="protein sequence ID" value="AAI45058.1"/>
    <property type="molecule type" value="mRNA"/>
</dbReference>
<dbReference type="CCDS" id="CCDS17886.1"/>
<dbReference type="RefSeq" id="NP_034029.2">
    <property type="nucleotide sequence ID" value="NM_009899.4"/>
</dbReference>
<dbReference type="SMR" id="Q9QX15"/>
<dbReference type="FunCoup" id="Q9QX15">
    <property type="interactions" value="345"/>
</dbReference>
<dbReference type="STRING" id="10090.ENSMUSP00000054526"/>
<dbReference type="MEROPS" id="M87.006"/>
<dbReference type="GlyCosmos" id="Q9QX15">
    <property type="glycosylation" value="8 sites, No reported glycans"/>
</dbReference>
<dbReference type="GlyGen" id="Q9QX15">
    <property type="glycosylation" value="8 sites, 3 N-linked glycans (3 sites)"/>
</dbReference>
<dbReference type="PhosphoSitePlus" id="Q9QX15"/>
<dbReference type="PaxDb" id="10090-ENSMUSP00000054526"/>
<dbReference type="ProteomicsDB" id="265482"/>
<dbReference type="DNASU" id="12722"/>
<dbReference type="Ensembl" id="ENSMUST00000059091.6">
    <property type="protein sequence ID" value="ENSMUSP00000054526.6"/>
    <property type="gene ID" value="ENSMUSG00000056025.13"/>
</dbReference>
<dbReference type="GeneID" id="12722"/>
<dbReference type="KEGG" id="mmu:12722"/>
<dbReference type="UCSC" id="uc008rpx.2">
    <property type="organism name" value="mouse"/>
</dbReference>
<dbReference type="AGR" id="MGI:1316732"/>
<dbReference type="CTD" id="12722"/>
<dbReference type="MGI" id="MGI:1316732">
    <property type="gene designation" value="Clca3a1"/>
</dbReference>
<dbReference type="VEuPathDB" id="HostDB:ENSMUSG00000056025"/>
<dbReference type="eggNOG" id="ENOG502QRRD">
    <property type="taxonomic scope" value="Eukaryota"/>
</dbReference>
<dbReference type="GeneTree" id="ENSGT00940000157555"/>
<dbReference type="HOGENOM" id="CLU_005812_0_1_1"/>
<dbReference type="InParanoid" id="Q9QX15"/>
<dbReference type="OMA" id="EHFEFKP"/>
<dbReference type="OrthoDB" id="687730at2759"/>
<dbReference type="PhylomeDB" id="Q9QX15"/>
<dbReference type="TreeFam" id="TF328396"/>
<dbReference type="BioGRID-ORCS" id="12722">
    <property type="hits" value="0 hits in 33 CRISPR screens"/>
</dbReference>
<dbReference type="ChiTaRS" id="Clca3a1">
    <property type="organism name" value="mouse"/>
</dbReference>
<dbReference type="PRO" id="PR:Q9QX15"/>
<dbReference type="Proteomes" id="UP000000589">
    <property type="component" value="Chromosome 3"/>
</dbReference>
<dbReference type="RNAct" id="Q9QX15">
    <property type="molecule type" value="protein"/>
</dbReference>
<dbReference type="Bgee" id="ENSMUSG00000056025">
    <property type="expression patterns" value="Expressed in endothelial cell of lymphatic vessel and 151 other cell types or tissues"/>
</dbReference>
<dbReference type="ExpressionAtlas" id="Q9QX15">
    <property type="expression patterns" value="baseline and differential"/>
</dbReference>
<dbReference type="GO" id="GO:0005886">
    <property type="term" value="C:plasma membrane"/>
    <property type="evidence" value="ECO:0000314"/>
    <property type="project" value="MGI"/>
</dbReference>
<dbReference type="GO" id="GO:0005229">
    <property type="term" value="F:intracellularly calcium-gated chloride channel activity"/>
    <property type="evidence" value="ECO:0000314"/>
    <property type="project" value="MGI"/>
</dbReference>
<dbReference type="GO" id="GO:0046872">
    <property type="term" value="F:metal ion binding"/>
    <property type="evidence" value="ECO:0007669"/>
    <property type="project" value="UniProtKB-KW"/>
</dbReference>
<dbReference type="GO" id="GO:0008237">
    <property type="term" value="F:metallopeptidase activity"/>
    <property type="evidence" value="ECO:0007669"/>
    <property type="project" value="UniProtKB-KW"/>
</dbReference>
<dbReference type="GO" id="GO:0006821">
    <property type="term" value="P:chloride transport"/>
    <property type="evidence" value="ECO:0000314"/>
    <property type="project" value="MGI"/>
</dbReference>
<dbReference type="GO" id="GO:0006508">
    <property type="term" value="P:proteolysis"/>
    <property type="evidence" value="ECO:0007669"/>
    <property type="project" value="UniProtKB-KW"/>
</dbReference>
<dbReference type="CDD" id="cd00198">
    <property type="entry name" value="vWFA"/>
    <property type="match status" value="1"/>
</dbReference>
<dbReference type="FunFam" id="2.60.40.10:FF:001134">
    <property type="entry name" value="Calcium-activated chloride channel regulator 1"/>
    <property type="match status" value="1"/>
</dbReference>
<dbReference type="FunFam" id="3.40.50.410:FF:000034">
    <property type="entry name" value="calcium-activated chloride channel regulator 1"/>
    <property type="match status" value="1"/>
</dbReference>
<dbReference type="Gene3D" id="3.40.50.410">
    <property type="entry name" value="von Willebrand factor, type A domain"/>
    <property type="match status" value="1"/>
</dbReference>
<dbReference type="InterPro" id="IPR004727">
    <property type="entry name" value="CLCA_chordata"/>
</dbReference>
<dbReference type="InterPro" id="IPR013642">
    <property type="entry name" value="CLCA_N"/>
</dbReference>
<dbReference type="InterPro" id="IPR051266">
    <property type="entry name" value="CLCR"/>
</dbReference>
<dbReference type="InterPro" id="IPR002035">
    <property type="entry name" value="VWF_A"/>
</dbReference>
<dbReference type="InterPro" id="IPR036465">
    <property type="entry name" value="vWFA_dom_sf"/>
</dbReference>
<dbReference type="NCBIfam" id="NF041940">
    <property type="entry name" value="choice_anch_X"/>
    <property type="match status" value="1"/>
</dbReference>
<dbReference type="NCBIfam" id="TIGR00868">
    <property type="entry name" value="hCaCC"/>
    <property type="match status" value="1"/>
</dbReference>
<dbReference type="PANTHER" id="PTHR10579">
    <property type="entry name" value="CALCIUM-ACTIVATED CHLORIDE CHANNEL REGULATOR"/>
    <property type="match status" value="1"/>
</dbReference>
<dbReference type="PANTHER" id="PTHR10579:SF160">
    <property type="entry name" value="CALCIUM-ACTIVATED CHLORIDE CHANNEL REGULATOR 3A-1-RELATED"/>
    <property type="match status" value="1"/>
</dbReference>
<dbReference type="Pfam" id="PF08434">
    <property type="entry name" value="CLCA"/>
    <property type="match status" value="1"/>
</dbReference>
<dbReference type="Pfam" id="PF00092">
    <property type="entry name" value="VWA"/>
    <property type="match status" value="1"/>
</dbReference>
<dbReference type="SMART" id="SM00327">
    <property type="entry name" value="VWA"/>
    <property type="match status" value="1"/>
</dbReference>
<dbReference type="SUPFAM" id="SSF53300">
    <property type="entry name" value="vWA-like"/>
    <property type="match status" value="1"/>
</dbReference>
<dbReference type="PROSITE" id="PS50234">
    <property type="entry name" value="VWFA"/>
    <property type="match status" value="1"/>
</dbReference>
<gene>
    <name evidence="18" type="primary">Clca3a1</name>
    <name evidence="8" type="synonym">Clca1</name>
</gene>
<comment type="function">
    <text evidence="5 7">Plays a role in modulating chloride current across the plasma membrane in a calcium-dependent manner.</text>
</comment>
<comment type="subunit">
    <text evidence="6">Part of a complex composed of complement component C3, CLCA1/CLCA3, A2ML1/OH and ALB/serum albumin.</text>
</comment>
<comment type="subcellular location">
    <subcellularLocation>
        <location evidence="9">Cell membrane</location>
        <topology evidence="9">Peripheral membrane protein</topology>
    </subcellularLocation>
</comment>
<comment type="tissue specificity">
    <text evidence="5 7">Highly expressed in skin and spleen, and at lower levels in kidney and liver (PubMed:10072771, PubMed:9822685). Also detected in lung and brain (PubMed:9822685). Not detected in lung or brain (PubMed:10072771). In lung, localizes to respiratory epithelia of the bronchi and trachea and the submucosal glands (PubMed:9822685).</text>
</comment>
<comment type="PTM">
    <text evidence="7">Glycosylated.</text>
</comment>
<comment type="PTM">
    <text evidence="1 7">The 130-kDa product is autoproteolytically processed by the metalloprotease domain and yields two subunits, a 90-kDa protein and a group of 32- to 38-kDa proteins (PubMed:9822685). The cleavage is necessary for calcium-activated chloride channel (CaCC) activation activity (By similarity).</text>
</comment>
<comment type="similarity">
    <text evidence="9">Belongs to the CLCR family.</text>
</comment>
<organism>
    <name type="scientific">Mus musculus</name>
    <name type="common">Mouse</name>
    <dbReference type="NCBI Taxonomy" id="10090"/>
    <lineage>
        <taxon>Eukaryota</taxon>
        <taxon>Metazoa</taxon>
        <taxon>Chordata</taxon>
        <taxon>Craniata</taxon>
        <taxon>Vertebrata</taxon>
        <taxon>Euteleostomi</taxon>
        <taxon>Mammalia</taxon>
        <taxon>Eutheria</taxon>
        <taxon>Euarchontoglires</taxon>
        <taxon>Glires</taxon>
        <taxon>Rodentia</taxon>
        <taxon>Myomorpha</taxon>
        <taxon>Muroidea</taxon>
        <taxon>Muridae</taxon>
        <taxon>Murinae</taxon>
        <taxon>Mus</taxon>
        <taxon>Mus</taxon>
    </lineage>
</organism>
<protein>
    <recommendedName>
        <fullName evidence="9">Calcium-activated chloride channel regulator 3A-1</fullName>
        <ecNumber evidence="10">3.4.-.-</ecNumber>
    </recommendedName>
</protein>
<accession>Q9QX15</accession>
<accession>B7ZN73</accession>
<accession>O88860</accession>
<accession>Q3UQR1</accession>
<accession>Q8C324</accession>
<accession>Q8CCM1</accession>
<feature type="signal peptide" evidence="2">
    <location>
        <begin position="1"/>
        <end position="21"/>
    </location>
</feature>
<feature type="chain" id="PRO_5010510991" description="Calcium-activated chloride channel regulator 3A-1">
    <location>
        <begin position="22"/>
        <end position="902"/>
    </location>
</feature>
<feature type="domain" description="VWFA" evidence="3">
    <location>
        <begin position="308"/>
        <end position="476"/>
    </location>
</feature>
<feature type="region of interest" description="Metalloprotease domain" evidence="1">
    <location>
        <begin position="45"/>
        <end position="199"/>
    </location>
</feature>
<feature type="active site" evidence="1">
    <location>
        <position position="156"/>
    </location>
</feature>
<feature type="binding site" evidence="1">
    <location>
        <position position="155"/>
    </location>
    <ligand>
        <name>Zn(2+)</name>
        <dbReference type="ChEBI" id="CHEBI:29105"/>
        <note>catalytic</note>
    </ligand>
</feature>
<feature type="binding site" evidence="1">
    <location>
        <position position="159"/>
    </location>
    <ligand>
        <name>Zn(2+)</name>
        <dbReference type="ChEBI" id="CHEBI:29105"/>
        <note>catalytic</note>
    </ligand>
</feature>
<feature type="binding site" evidence="1">
    <location>
        <position position="166"/>
    </location>
    <ligand>
        <name>Zn(2+)</name>
        <dbReference type="ChEBI" id="CHEBI:29105"/>
        <note>catalytic</note>
    </ligand>
</feature>
<feature type="site" description="Cleavage; by autolysis" evidence="1">
    <location>
        <begin position="698"/>
        <end position="699"/>
    </location>
</feature>
<feature type="glycosylation site" description="N-linked (GlcNAc...) asparagine" evidence="4">
    <location>
        <position position="75"/>
    </location>
</feature>
<feature type="glycosylation site" description="N-linked (GlcNAc...) asparagine" evidence="4">
    <location>
        <position position="504"/>
    </location>
</feature>
<feature type="glycosylation site" description="N-linked (GlcNAc...) asparagine" evidence="4">
    <location>
        <position position="515"/>
    </location>
</feature>
<feature type="glycosylation site" description="N-linked (GlcNAc...) asparagine" evidence="4">
    <location>
        <position position="630"/>
    </location>
</feature>
<feature type="glycosylation site" description="N-linked (GlcNAc...) asparagine" evidence="4">
    <location>
        <position position="687"/>
    </location>
</feature>
<feature type="glycosylation site" description="N-linked (GlcNAc...) asparagine" evidence="4">
    <location>
        <position position="697"/>
    </location>
</feature>
<feature type="glycosylation site" description="N-linked (GlcNAc...) asparagine" evidence="4">
    <location>
        <position position="809"/>
    </location>
</feature>
<feature type="glycosylation site" description="N-linked (GlcNAc...) asparagine" evidence="4">
    <location>
        <position position="814"/>
    </location>
</feature>
<feature type="sequence conflict" description="In Ref. 5; AAI45058." evidence="9" ref="5">
    <original>P</original>
    <variation>S</variation>
    <location>
        <position position="88"/>
    </location>
</feature>
<feature type="sequence conflict" description="In Ref. 3; BAC27903." evidence="9" ref="3">
    <original>P</original>
    <variation>T</variation>
    <location>
        <position position="116"/>
    </location>
</feature>
<feature type="sequence conflict" description="In Ref. 3; BAE24978." evidence="9" ref="3">
    <original>K</original>
    <variation>E</variation>
    <location>
        <position position="303"/>
    </location>
</feature>
<feature type="sequence conflict" description="In Ref. 2; AAC35003." evidence="9" ref="2">
    <original>G</original>
    <variation>S</variation>
    <location>
        <position position="674"/>
    </location>
</feature>
<feature type="sequence conflict" description="In Ref. 3; BAC39823." evidence="9" ref="3">
    <original>QRNK</original>
    <variation>PRNQ</variation>
    <location>
        <begin position="685"/>
        <end position="688"/>
    </location>
</feature>
<feature type="sequence conflict" description="In Ref. 3; BAC39823." evidence="9" ref="3">
    <original>Q</original>
    <variation>P</variation>
    <location>
        <position position="721"/>
    </location>
</feature>
<feature type="sequence conflict" description="In Ref. 3; BAC39823." evidence="9" ref="3">
    <original>N</original>
    <variation>H</variation>
    <location>
        <position position="786"/>
    </location>
</feature>
<feature type="sequence conflict" description="In Ref. 2; AAC35003." evidence="9" ref="2">
    <location>
        <position position="882"/>
    </location>
</feature>
<feature type="sequence conflict" description="In Ref. 2; AAC35003." evidence="9" ref="2">
    <original>S</original>
    <variation>C</variation>
    <location>
        <position position="887"/>
    </location>
</feature>
<sequence>MVPGLQVLLFLTLHLLQNTESSMVHLNSNGYEGVVIAINPSVPEDERLIPSIKEMVTQASTYLFEASQGRVYFRNISILVPMTWKSKPEYLMPKRESYDKADVIVADPHLQHGDDPYTLQYGQCGDRGQYIHFTPNFLLTDNLRIYGPRGRVFVHEWAHLRWGVFDEYNVDQPFYMSRKNTIEATRCSTRITGTNVVHNCERGNCVTRACRRDSKTRLYEPKCTFIPDKIQTAGASIMFMQNLNSVVEFCTEKNHNAEAPNLQNKMCNRRSTWDVIKTSADFQNAPPMRGTEAPPPPTFSLLKSRRRVVCLVLDKSGSMDKEDRLIRMNQAAELYLTQIVEKESMVGLVTFDSAAHIQNYLIKITSSSDYQKITANLPQQASGGTSICHGLQAGFQAITSSDQSTSGSEIVLLTDGEDNGIRSCFEAVSRSGAIIHTIALGPSAARELETLSDMTGGLRFYANKDLNSLIDAFSRISSTSGSVSQQALQLESKAFDVRAGAWINGTVPLDSTVGNDTFFVITWMVKKPEIILQDPKGKKYTTSDFQDDKLNIRSARLQIPGTAETGTWTYSITGTKSQLITMTVTTRARSPTMEPLLATAHMSQSTAQYPSRMIVYARVSQGFLPVLGANVTALIEAEHGHQVTLELWDNGAGADTVKNDGIYTRYFTDYHGNGRYSLKVRVQAQRNKTRLSLRQKNKSLYIPGYVENGKIVLNPPRPDVQEEAIEATVEDFNRVTSGGSFTVSGAPPDGDHARVFPPSKVTDLEAEFIGDYIHLTWTAPGKVLDNGRAHRYIIRMSQHPLDLQEDFNNATLVNASSLIPKEAGSKETFKFKPETFKIANGIQLYIAIQADNEASLTSEVSNIAQAVKLTSLEDSISALGDDISAISMTIWGLTVIFNSILN</sequence>
<proteinExistence type="evidence at protein level"/>